<comment type="function">
    <text evidence="1">Binds directly to 16S ribosomal RNA.</text>
</comment>
<comment type="similarity">
    <text evidence="1">Belongs to the bacterial ribosomal protein bS20 family.</text>
</comment>
<reference key="1">
    <citation type="submission" date="2003-03" db="EMBL/GenBank/DDBJ databases">
        <title>The complete genome sequence of Neisseria gonorrhoeae.</title>
        <authorList>
            <person name="Lewis L.A."/>
            <person name="Gillaspy A.F."/>
            <person name="McLaughlin R.E."/>
            <person name="Gipson M."/>
            <person name="Ducey T.F."/>
            <person name="Ownbey T."/>
            <person name="Hartman K."/>
            <person name="Nydick C."/>
            <person name="Carson M.B."/>
            <person name="Vaughn J."/>
            <person name="Thomson C."/>
            <person name="Song L."/>
            <person name="Lin S."/>
            <person name="Yuan X."/>
            <person name="Najar F."/>
            <person name="Zhan M."/>
            <person name="Ren Q."/>
            <person name="Zhu H."/>
            <person name="Qi S."/>
            <person name="Kenton S.M."/>
            <person name="Lai H."/>
            <person name="White J.D."/>
            <person name="Clifton S."/>
            <person name="Roe B.A."/>
            <person name="Dyer D.W."/>
        </authorList>
    </citation>
    <scope>NUCLEOTIDE SEQUENCE [LARGE SCALE GENOMIC DNA]</scope>
    <source>
        <strain>ATCC 700825 / FA 1090</strain>
    </source>
</reference>
<name>RS20_NEIG1</name>
<gene>
    <name evidence="1" type="primary">rpsT</name>
    <name type="ordered locus">NGO_1493</name>
</gene>
<protein>
    <recommendedName>
        <fullName evidence="1">Small ribosomal subunit protein bS20</fullName>
    </recommendedName>
    <alternativeName>
        <fullName evidence="3">30S ribosomal protein S20</fullName>
    </alternativeName>
</protein>
<evidence type="ECO:0000255" key="1">
    <source>
        <dbReference type="HAMAP-Rule" id="MF_00500"/>
    </source>
</evidence>
<evidence type="ECO:0000256" key="2">
    <source>
        <dbReference type="SAM" id="MobiDB-lite"/>
    </source>
</evidence>
<evidence type="ECO:0000305" key="3"/>
<accession>Q5F6Q6</accession>
<sequence length="87" mass="9508">MANSAQARKRARQSVKQRAHNASLRTAFRTAVKKVLKAVEAGDKAAAQAVYQESVKVIDRIADKGVFHKNKAARHKSRLSAKVKALA</sequence>
<dbReference type="EMBL" id="AE004969">
    <property type="protein sequence ID" value="AAW90131.1"/>
    <property type="molecule type" value="Genomic_DNA"/>
</dbReference>
<dbReference type="RefSeq" id="WP_002212556.1">
    <property type="nucleotide sequence ID" value="NC_002946.2"/>
</dbReference>
<dbReference type="RefSeq" id="YP_208543.1">
    <property type="nucleotide sequence ID" value="NC_002946.2"/>
</dbReference>
<dbReference type="SMR" id="Q5F6Q6"/>
<dbReference type="STRING" id="242231.NGO_1493"/>
<dbReference type="GeneID" id="93387558"/>
<dbReference type="KEGG" id="ngo:NGO_1493"/>
<dbReference type="PATRIC" id="fig|242231.10.peg.1767"/>
<dbReference type="HOGENOM" id="CLU_160655_4_0_4"/>
<dbReference type="PRO" id="PR:Q5F6Q6"/>
<dbReference type="Proteomes" id="UP000000535">
    <property type="component" value="Chromosome"/>
</dbReference>
<dbReference type="GO" id="GO:0005829">
    <property type="term" value="C:cytosol"/>
    <property type="evidence" value="ECO:0007669"/>
    <property type="project" value="TreeGrafter"/>
</dbReference>
<dbReference type="GO" id="GO:0015935">
    <property type="term" value="C:small ribosomal subunit"/>
    <property type="evidence" value="ECO:0007669"/>
    <property type="project" value="TreeGrafter"/>
</dbReference>
<dbReference type="GO" id="GO:0070181">
    <property type="term" value="F:small ribosomal subunit rRNA binding"/>
    <property type="evidence" value="ECO:0007669"/>
    <property type="project" value="TreeGrafter"/>
</dbReference>
<dbReference type="GO" id="GO:0003735">
    <property type="term" value="F:structural constituent of ribosome"/>
    <property type="evidence" value="ECO:0007669"/>
    <property type="project" value="InterPro"/>
</dbReference>
<dbReference type="GO" id="GO:0006412">
    <property type="term" value="P:translation"/>
    <property type="evidence" value="ECO:0007669"/>
    <property type="project" value="UniProtKB-UniRule"/>
</dbReference>
<dbReference type="FunFam" id="1.20.58.110:FF:000001">
    <property type="entry name" value="30S ribosomal protein S20"/>
    <property type="match status" value="1"/>
</dbReference>
<dbReference type="Gene3D" id="1.20.58.110">
    <property type="entry name" value="Ribosomal protein S20"/>
    <property type="match status" value="1"/>
</dbReference>
<dbReference type="HAMAP" id="MF_00500">
    <property type="entry name" value="Ribosomal_bS20"/>
    <property type="match status" value="1"/>
</dbReference>
<dbReference type="InterPro" id="IPR002583">
    <property type="entry name" value="Ribosomal_bS20"/>
</dbReference>
<dbReference type="InterPro" id="IPR036510">
    <property type="entry name" value="Ribosomal_bS20_sf"/>
</dbReference>
<dbReference type="NCBIfam" id="TIGR00029">
    <property type="entry name" value="S20"/>
    <property type="match status" value="1"/>
</dbReference>
<dbReference type="PANTHER" id="PTHR33398">
    <property type="entry name" value="30S RIBOSOMAL PROTEIN S20"/>
    <property type="match status" value="1"/>
</dbReference>
<dbReference type="PANTHER" id="PTHR33398:SF1">
    <property type="entry name" value="SMALL RIBOSOMAL SUBUNIT PROTEIN BS20C"/>
    <property type="match status" value="1"/>
</dbReference>
<dbReference type="Pfam" id="PF01649">
    <property type="entry name" value="Ribosomal_S20p"/>
    <property type="match status" value="1"/>
</dbReference>
<dbReference type="SUPFAM" id="SSF46992">
    <property type="entry name" value="Ribosomal protein S20"/>
    <property type="match status" value="1"/>
</dbReference>
<feature type="chain" id="PRO_0000224973" description="Small ribosomal subunit protein bS20">
    <location>
        <begin position="1"/>
        <end position="87"/>
    </location>
</feature>
<feature type="region of interest" description="Disordered" evidence="2">
    <location>
        <begin position="1"/>
        <end position="22"/>
    </location>
</feature>
<feature type="compositionally biased region" description="Basic residues" evidence="2">
    <location>
        <begin position="7"/>
        <end position="19"/>
    </location>
</feature>
<organism>
    <name type="scientific">Neisseria gonorrhoeae (strain ATCC 700825 / FA 1090)</name>
    <dbReference type="NCBI Taxonomy" id="242231"/>
    <lineage>
        <taxon>Bacteria</taxon>
        <taxon>Pseudomonadati</taxon>
        <taxon>Pseudomonadota</taxon>
        <taxon>Betaproteobacteria</taxon>
        <taxon>Neisseriales</taxon>
        <taxon>Neisseriaceae</taxon>
        <taxon>Neisseria</taxon>
    </lineage>
</organism>
<keyword id="KW-1185">Reference proteome</keyword>
<keyword id="KW-0687">Ribonucleoprotein</keyword>
<keyword id="KW-0689">Ribosomal protein</keyword>
<keyword id="KW-0694">RNA-binding</keyword>
<keyword id="KW-0699">rRNA-binding</keyword>
<proteinExistence type="inferred from homology"/>